<name>ENGB_HYDCU</name>
<accession>Q31JM9</accession>
<protein>
    <recommendedName>
        <fullName evidence="1">Probable GTP-binding protein EngB</fullName>
    </recommendedName>
</protein>
<evidence type="ECO:0000255" key="1">
    <source>
        <dbReference type="HAMAP-Rule" id="MF_00321"/>
    </source>
</evidence>
<keyword id="KW-0131">Cell cycle</keyword>
<keyword id="KW-0132">Cell division</keyword>
<keyword id="KW-0342">GTP-binding</keyword>
<keyword id="KW-0460">Magnesium</keyword>
<keyword id="KW-0479">Metal-binding</keyword>
<keyword id="KW-0547">Nucleotide-binding</keyword>
<keyword id="KW-0717">Septation</keyword>
<comment type="function">
    <text evidence="1">Necessary for normal cell division and for the maintenance of normal septation.</text>
</comment>
<comment type="cofactor">
    <cofactor evidence="1">
        <name>Mg(2+)</name>
        <dbReference type="ChEBI" id="CHEBI:18420"/>
    </cofactor>
</comment>
<comment type="similarity">
    <text evidence="1">Belongs to the TRAFAC class TrmE-Era-EngA-EngB-Septin-like GTPase superfamily. EngB GTPase family.</text>
</comment>
<dbReference type="EMBL" id="CP000109">
    <property type="protein sequence ID" value="ABB40644.1"/>
    <property type="molecule type" value="Genomic_DNA"/>
</dbReference>
<dbReference type="SMR" id="Q31JM9"/>
<dbReference type="STRING" id="317025.Tcr_0047"/>
<dbReference type="KEGG" id="tcx:Tcr_0047"/>
<dbReference type="eggNOG" id="COG0218">
    <property type="taxonomic scope" value="Bacteria"/>
</dbReference>
<dbReference type="HOGENOM" id="CLU_033732_1_0_6"/>
<dbReference type="OrthoDB" id="9804921at2"/>
<dbReference type="GO" id="GO:0005829">
    <property type="term" value="C:cytosol"/>
    <property type="evidence" value="ECO:0007669"/>
    <property type="project" value="TreeGrafter"/>
</dbReference>
<dbReference type="GO" id="GO:0005525">
    <property type="term" value="F:GTP binding"/>
    <property type="evidence" value="ECO:0007669"/>
    <property type="project" value="UniProtKB-UniRule"/>
</dbReference>
<dbReference type="GO" id="GO:0046872">
    <property type="term" value="F:metal ion binding"/>
    <property type="evidence" value="ECO:0007669"/>
    <property type="project" value="UniProtKB-KW"/>
</dbReference>
<dbReference type="GO" id="GO:0000917">
    <property type="term" value="P:division septum assembly"/>
    <property type="evidence" value="ECO:0007669"/>
    <property type="project" value="UniProtKB-KW"/>
</dbReference>
<dbReference type="CDD" id="cd01876">
    <property type="entry name" value="YihA_EngB"/>
    <property type="match status" value="1"/>
</dbReference>
<dbReference type="FunFam" id="3.40.50.300:FF:000098">
    <property type="entry name" value="Probable GTP-binding protein EngB"/>
    <property type="match status" value="1"/>
</dbReference>
<dbReference type="Gene3D" id="3.40.50.300">
    <property type="entry name" value="P-loop containing nucleotide triphosphate hydrolases"/>
    <property type="match status" value="1"/>
</dbReference>
<dbReference type="HAMAP" id="MF_00321">
    <property type="entry name" value="GTPase_EngB"/>
    <property type="match status" value="1"/>
</dbReference>
<dbReference type="InterPro" id="IPR030393">
    <property type="entry name" value="G_ENGB_dom"/>
</dbReference>
<dbReference type="InterPro" id="IPR006073">
    <property type="entry name" value="GTP-bd"/>
</dbReference>
<dbReference type="InterPro" id="IPR019987">
    <property type="entry name" value="GTP-bd_ribosome_bio_YsxC"/>
</dbReference>
<dbReference type="InterPro" id="IPR027417">
    <property type="entry name" value="P-loop_NTPase"/>
</dbReference>
<dbReference type="NCBIfam" id="TIGR03598">
    <property type="entry name" value="GTPase_YsxC"/>
    <property type="match status" value="1"/>
</dbReference>
<dbReference type="PANTHER" id="PTHR11649:SF13">
    <property type="entry name" value="ENGB-TYPE G DOMAIN-CONTAINING PROTEIN"/>
    <property type="match status" value="1"/>
</dbReference>
<dbReference type="PANTHER" id="PTHR11649">
    <property type="entry name" value="MSS1/TRME-RELATED GTP-BINDING PROTEIN"/>
    <property type="match status" value="1"/>
</dbReference>
<dbReference type="Pfam" id="PF01926">
    <property type="entry name" value="MMR_HSR1"/>
    <property type="match status" value="1"/>
</dbReference>
<dbReference type="SUPFAM" id="SSF52540">
    <property type="entry name" value="P-loop containing nucleoside triphosphate hydrolases"/>
    <property type="match status" value="1"/>
</dbReference>
<dbReference type="PROSITE" id="PS51706">
    <property type="entry name" value="G_ENGB"/>
    <property type="match status" value="1"/>
</dbReference>
<proteinExistence type="inferred from homology"/>
<organism>
    <name type="scientific">Hydrogenovibrio crunogenus (strain DSM 25203 / XCL-2)</name>
    <name type="common">Thiomicrospira crunogena</name>
    <dbReference type="NCBI Taxonomy" id="317025"/>
    <lineage>
        <taxon>Bacteria</taxon>
        <taxon>Pseudomonadati</taxon>
        <taxon>Pseudomonadota</taxon>
        <taxon>Gammaproteobacteria</taxon>
        <taxon>Thiotrichales</taxon>
        <taxon>Piscirickettsiaceae</taxon>
        <taxon>Hydrogenovibrio</taxon>
    </lineage>
</organism>
<sequence length="212" mass="24237">MQHPLYQQATYLKSAPDLSHCPEDFGYEVAFAGRSNAGKSSALNVITSQRGLAKTSKTPGRTQLINFFECDEQRKLVDLPGYGYAKVNVNTKRAWERSLSQYIEVRSSLKGLIMMVDSRMPPTEIDLMMLDWTLTLNLPVHILLTKSDKLKKGPAQNSLLKMRQLLNEKYPHATVQLFSSLKRQGLDEVWAKLDEWMEYERPVKSQPETKES</sequence>
<feature type="chain" id="PRO_0000266975" description="Probable GTP-binding protein EngB">
    <location>
        <begin position="1"/>
        <end position="212"/>
    </location>
</feature>
<feature type="domain" description="EngB-type G" evidence="1">
    <location>
        <begin position="25"/>
        <end position="199"/>
    </location>
</feature>
<feature type="binding site" evidence="1">
    <location>
        <begin position="33"/>
        <end position="40"/>
    </location>
    <ligand>
        <name>GTP</name>
        <dbReference type="ChEBI" id="CHEBI:37565"/>
    </ligand>
</feature>
<feature type="binding site" evidence="1">
    <location>
        <position position="40"/>
    </location>
    <ligand>
        <name>Mg(2+)</name>
        <dbReference type="ChEBI" id="CHEBI:18420"/>
    </ligand>
</feature>
<feature type="binding site" evidence="1">
    <location>
        <begin position="60"/>
        <end position="64"/>
    </location>
    <ligand>
        <name>GTP</name>
        <dbReference type="ChEBI" id="CHEBI:37565"/>
    </ligand>
</feature>
<feature type="binding site" evidence="1">
    <location>
        <position position="62"/>
    </location>
    <ligand>
        <name>Mg(2+)</name>
        <dbReference type="ChEBI" id="CHEBI:18420"/>
    </ligand>
</feature>
<feature type="binding site" evidence="1">
    <location>
        <begin position="78"/>
        <end position="81"/>
    </location>
    <ligand>
        <name>GTP</name>
        <dbReference type="ChEBI" id="CHEBI:37565"/>
    </ligand>
</feature>
<feature type="binding site" evidence="1">
    <location>
        <begin position="145"/>
        <end position="148"/>
    </location>
    <ligand>
        <name>GTP</name>
        <dbReference type="ChEBI" id="CHEBI:37565"/>
    </ligand>
</feature>
<feature type="binding site" evidence="1">
    <location>
        <begin position="178"/>
        <end position="180"/>
    </location>
    <ligand>
        <name>GTP</name>
        <dbReference type="ChEBI" id="CHEBI:37565"/>
    </ligand>
</feature>
<reference key="1">
    <citation type="journal article" date="2006" name="PLoS Biol.">
        <title>The genome of deep-sea vent chemolithoautotroph Thiomicrospira crunogena XCL-2.</title>
        <authorList>
            <person name="Scott K.M."/>
            <person name="Sievert S.M."/>
            <person name="Abril F.N."/>
            <person name="Ball L.A."/>
            <person name="Barrett C.J."/>
            <person name="Blake R.A."/>
            <person name="Boller A.J."/>
            <person name="Chain P.S.G."/>
            <person name="Clark J.A."/>
            <person name="Davis C.R."/>
            <person name="Detter C."/>
            <person name="Do K.F."/>
            <person name="Dobrinski K.P."/>
            <person name="Faza B.I."/>
            <person name="Fitzpatrick K.A."/>
            <person name="Freyermuth S.K."/>
            <person name="Harmer T.L."/>
            <person name="Hauser L.J."/>
            <person name="Huegler M."/>
            <person name="Kerfeld C.A."/>
            <person name="Klotz M.G."/>
            <person name="Kong W.W."/>
            <person name="Land M."/>
            <person name="Lapidus A."/>
            <person name="Larimer F.W."/>
            <person name="Longo D.L."/>
            <person name="Lucas S."/>
            <person name="Malfatti S.A."/>
            <person name="Massey S.E."/>
            <person name="Martin D.D."/>
            <person name="McCuddin Z."/>
            <person name="Meyer F."/>
            <person name="Moore J.L."/>
            <person name="Ocampo L.H. Jr."/>
            <person name="Paul J.H."/>
            <person name="Paulsen I.T."/>
            <person name="Reep D.K."/>
            <person name="Ren Q."/>
            <person name="Ross R.L."/>
            <person name="Sato P.Y."/>
            <person name="Thomas P."/>
            <person name="Tinkham L.E."/>
            <person name="Zeruth G.T."/>
        </authorList>
    </citation>
    <scope>NUCLEOTIDE SEQUENCE [LARGE SCALE GENOMIC DNA]</scope>
    <source>
        <strain>DSM 25203 / XCL-2</strain>
    </source>
</reference>
<gene>
    <name evidence="1" type="primary">engB</name>
    <name type="ordered locus">Tcr_0047</name>
</gene>